<dbReference type="EMBL" id="AE017262">
    <property type="protein sequence ID" value="AAT05226.1"/>
    <property type="molecule type" value="Genomic_DNA"/>
</dbReference>
<dbReference type="RefSeq" id="WP_003725420.1">
    <property type="nucleotide sequence ID" value="NC_002973.6"/>
</dbReference>
<dbReference type="SMR" id="Q71WU0"/>
<dbReference type="KEGG" id="lmf:LMOf2365_2461"/>
<dbReference type="HOGENOM" id="CLU_001370_0_2_9"/>
<dbReference type="GO" id="GO:0005737">
    <property type="term" value="C:cytoplasm"/>
    <property type="evidence" value="ECO:0007669"/>
    <property type="project" value="UniProtKB-SubCell"/>
</dbReference>
<dbReference type="GO" id="GO:0009380">
    <property type="term" value="C:excinuclease repair complex"/>
    <property type="evidence" value="ECO:0007669"/>
    <property type="project" value="InterPro"/>
</dbReference>
<dbReference type="GO" id="GO:0005524">
    <property type="term" value="F:ATP binding"/>
    <property type="evidence" value="ECO:0007669"/>
    <property type="project" value="UniProtKB-UniRule"/>
</dbReference>
<dbReference type="GO" id="GO:0016887">
    <property type="term" value="F:ATP hydrolysis activity"/>
    <property type="evidence" value="ECO:0007669"/>
    <property type="project" value="InterPro"/>
</dbReference>
<dbReference type="GO" id="GO:0003677">
    <property type="term" value="F:DNA binding"/>
    <property type="evidence" value="ECO:0007669"/>
    <property type="project" value="UniProtKB-UniRule"/>
</dbReference>
<dbReference type="GO" id="GO:0009381">
    <property type="term" value="F:excinuclease ABC activity"/>
    <property type="evidence" value="ECO:0007669"/>
    <property type="project" value="UniProtKB-UniRule"/>
</dbReference>
<dbReference type="GO" id="GO:0008270">
    <property type="term" value="F:zinc ion binding"/>
    <property type="evidence" value="ECO:0007669"/>
    <property type="project" value="UniProtKB-UniRule"/>
</dbReference>
<dbReference type="GO" id="GO:0006289">
    <property type="term" value="P:nucleotide-excision repair"/>
    <property type="evidence" value="ECO:0007669"/>
    <property type="project" value="UniProtKB-UniRule"/>
</dbReference>
<dbReference type="GO" id="GO:0009432">
    <property type="term" value="P:SOS response"/>
    <property type="evidence" value="ECO:0007669"/>
    <property type="project" value="UniProtKB-UniRule"/>
</dbReference>
<dbReference type="CDD" id="cd03270">
    <property type="entry name" value="ABC_UvrA_I"/>
    <property type="match status" value="1"/>
</dbReference>
<dbReference type="CDD" id="cd03271">
    <property type="entry name" value="ABC_UvrA_II"/>
    <property type="match status" value="1"/>
</dbReference>
<dbReference type="FunFam" id="1.20.1580.10:FF:000002">
    <property type="entry name" value="UvrABC system protein A"/>
    <property type="match status" value="1"/>
</dbReference>
<dbReference type="FunFam" id="3.40.50.300:FF:000028">
    <property type="entry name" value="UvrABC system protein A"/>
    <property type="match status" value="1"/>
</dbReference>
<dbReference type="Gene3D" id="1.10.8.280">
    <property type="entry name" value="ABC transporter ATPase domain-like"/>
    <property type="match status" value="1"/>
</dbReference>
<dbReference type="Gene3D" id="1.20.1580.10">
    <property type="entry name" value="ABC transporter ATPase like domain"/>
    <property type="match status" value="2"/>
</dbReference>
<dbReference type="Gene3D" id="3.30.1490.20">
    <property type="entry name" value="ATP-grasp fold, A domain"/>
    <property type="match status" value="1"/>
</dbReference>
<dbReference type="Gene3D" id="3.40.50.300">
    <property type="entry name" value="P-loop containing nucleotide triphosphate hydrolases"/>
    <property type="match status" value="2"/>
</dbReference>
<dbReference type="HAMAP" id="MF_00205">
    <property type="entry name" value="UvrA"/>
    <property type="match status" value="1"/>
</dbReference>
<dbReference type="InterPro" id="IPR003439">
    <property type="entry name" value="ABC_transporter-like_ATP-bd"/>
</dbReference>
<dbReference type="InterPro" id="IPR017871">
    <property type="entry name" value="ABC_transporter-like_CS"/>
</dbReference>
<dbReference type="InterPro" id="IPR013815">
    <property type="entry name" value="ATP_grasp_subdomain_1"/>
</dbReference>
<dbReference type="InterPro" id="IPR027417">
    <property type="entry name" value="P-loop_NTPase"/>
</dbReference>
<dbReference type="InterPro" id="IPR004602">
    <property type="entry name" value="UvrA"/>
</dbReference>
<dbReference type="InterPro" id="IPR041552">
    <property type="entry name" value="UvrA_DNA-bd"/>
</dbReference>
<dbReference type="InterPro" id="IPR041102">
    <property type="entry name" value="UvrA_inter"/>
</dbReference>
<dbReference type="NCBIfam" id="NF001503">
    <property type="entry name" value="PRK00349.1"/>
    <property type="match status" value="1"/>
</dbReference>
<dbReference type="NCBIfam" id="TIGR00630">
    <property type="entry name" value="uvra"/>
    <property type="match status" value="1"/>
</dbReference>
<dbReference type="PANTHER" id="PTHR43152">
    <property type="entry name" value="UVRABC SYSTEM PROTEIN A"/>
    <property type="match status" value="1"/>
</dbReference>
<dbReference type="PANTHER" id="PTHR43152:SF3">
    <property type="entry name" value="UVRABC SYSTEM PROTEIN A"/>
    <property type="match status" value="1"/>
</dbReference>
<dbReference type="Pfam" id="PF17755">
    <property type="entry name" value="UvrA_DNA-bind"/>
    <property type="match status" value="1"/>
</dbReference>
<dbReference type="Pfam" id="PF17760">
    <property type="entry name" value="UvrA_inter"/>
    <property type="match status" value="1"/>
</dbReference>
<dbReference type="SUPFAM" id="SSF52540">
    <property type="entry name" value="P-loop containing nucleoside triphosphate hydrolases"/>
    <property type="match status" value="2"/>
</dbReference>
<dbReference type="PROSITE" id="PS00211">
    <property type="entry name" value="ABC_TRANSPORTER_1"/>
    <property type="match status" value="2"/>
</dbReference>
<dbReference type="PROSITE" id="PS50893">
    <property type="entry name" value="ABC_TRANSPORTER_2"/>
    <property type="match status" value="1"/>
</dbReference>
<comment type="function">
    <text evidence="1">The UvrABC repair system catalyzes the recognition and processing of DNA lesions. UvrA is an ATPase and a DNA-binding protein. A damage recognition complex composed of 2 UvrA and 2 UvrB subunits scans DNA for abnormalities. When the presence of a lesion has been verified by UvrB, the UvrA molecules dissociate.</text>
</comment>
<comment type="subunit">
    <text evidence="1">Forms a heterotetramer with UvrB during the search for lesions.</text>
</comment>
<comment type="subcellular location">
    <subcellularLocation>
        <location evidence="1">Cytoplasm</location>
    </subcellularLocation>
</comment>
<comment type="similarity">
    <text evidence="1">Belongs to the ABC transporter superfamily. UvrA family.</text>
</comment>
<organism>
    <name type="scientific">Listeria monocytogenes serotype 4b (strain F2365)</name>
    <dbReference type="NCBI Taxonomy" id="265669"/>
    <lineage>
        <taxon>Bacteria</taxon>
        <taxon>Bacillati</taxon>
        <taxon>Bacillota</taxon>
        <taxon>Bacilli</taxon>
        <taxon>Bacillales</taxon>
        <taxon>Listeriaceae</taxon>
        <taxon>Listeria</taxon>
    </lineage>
</organism>
<feature type="chain" id="PRO_0000093061" description="UvrABC system protein A">
    <location>
        <begin position="1"/>
        <end position="956"/>
    </location>
</feature>
<feature type="domain" description="ABC transporter 1" evidence="1">
    <location>
        <begin position="309"/>
        <end position="587"/>
    </location>
</feature>
<feature type="domain" description="ABC transporter 2" evidence="1">
    <location>
        <begin position="607"/>
        <end position="936"/>
    </location>
</feature>
<feature type="zinc finger region" description="C4-type" evidence="1">
    <location>
        <begin position="252"/>
        <end position="279"/>
    </location>
</feature>
<feature type="zinc finger region" description="C4-type" evidence="1">
    <location>
        <begin position="738"/>
        <end position="764"/>
    </location>
</feature>
<feature type="binding site" evidence="1">
    <location>
        <begin position="33"/>
        <end position="40"/>
    </location>
    <ligand>
        <name>ATP</name>
        <dbReference type="ChEBI" id="CHEBI:30616"/>
    </ligand>
</feature>
<feature type="binding site" evidence="1">
    <location>
        <begin position="639"/>
        <end position="646"/>
    </location>
    <ligand>
        <name>ATP</name>
        <dbReference type="ChEBI" id="CHEBI:30616"/>
    </ligand>
</feature>
<gene>
    <name evidence="1" type="primary">uvrA</name>
    <name type="ordered locus">LMOf2365_2461</name>
</gene>
<accession>Q71WU0</accession>
<proteinExistence type="inferred from homology"/>
<reference key="1">
    <citation type="journal article" date="2004" name="Nucleic Acids Res.">
        <title>Whole genome comparisons of serotype 4b and 1/2a strains of the food-borne pathogen Listeria monocytogenes reveal new insights into the core genome components of this species.</title>
        <authorList>
            <person name="Nelson K.E."/>
            <person name="Fouts D.E."/>
            <person name="Mongodin E.F."/>
            <person name="Ravel J."/>
            <person name="DeBoy R.T."/>
            <person name="Kolonay J.F."/>
            <person name="Rasko D.A."/>
            <person name="Angiuoli S.V."/>
            <person name="Gill S.R."/>
            <person name="Paulsen I.T."/>
            <person name="Peterson J.D."/>
            <person name="White O."/>
            <person name="Nelson W.C."/>
            <person name="Nierman W.C."/>
            <person name="Beanan M.J."/>
            <person name="Brinkac L.M."/>
            <person name="Daugherty S.C."/>
            <person name="Dodson R.J."/>
            <person name="Durkin A.S."/>
            <person name="Madupu R."/>
            <person name="Haft D.H."/>
            <person name="Selengut J."/>
            <person name="Van Aken S.E."/>
            <person name="Khouri H.M."/>
            <person name="Fedorova N."/>
            <person name="Forberger H.A."/>
            <person name="Tran B."/>
            <person name="Kathariou S."/>
            <person name="Wonderling L.D."/>
            <person name="Uhlich G.A."/>
            <person name="Bayles D.O."/>
            <person name="Luchansky J.B."/>
            <person name="Fraser C.M."/>
        </authorList>
    </citation>
    <scope>NUCLEOTIDE SEQUENCE [LARGE SCALE GENOMIC DNA]</scope>
    <source>
        <strain>F2365</strain>
    </source>
</reference>
<evidence type="ECO:0000255" key="1">
    <source>
        <dbReference type="HAMAP-Rule" id="MF_00205"/>
    </source>
</evidence>
<protein>
    <recommendedName>
        <fullName evidence="1">UvrABC system protein A</fullName>
        <shortName evidence="1">UvrA protein</shortName>
    </recommendedName>
    <alternativeName>
        <fullName evidence="1">Excinuclease ABC subunit A</fullName>
    </alternativeName>
</protein>
<name>UVRA_LISMF</name>
<keyword id="KW-0067">ATP-binding</keyword>
<keyword id="KW-0963">Cytoplasm</keyword>
<keyword id="KW-0227">DNA damage</keyword>
<keyword id="KW-0228">DNA excision</keyword>
<keyword id="KW-0234">DNA repair</keyword>
<keyword id="KW-0238">DNA-binding</keyword>
<keyword id="KW-0267">Excision nuclease</keyword>
<keyword id="KW-0479">Metal-binding</keyword>
<keyword id="KW-0547">Nucleotide-binding</keyword>
<keyword id="KW-0677">Repeat</keyword>
<keyword id="KW-0742">SOS response</keyword>
<keyword id="KW-0862">Zinc</keyword>
<keyword id="KW-0863">Zinc-finger</keyword>
<sequence>MDKEKIVIQGARAHNLKNIDVEIPRDKLVVMTGLSGSGKSSLAFDTIYAEGQRRYVESLSAYARQFLGQMDKPDVDLIEGLSPAISIDQKTTSRNPRSTVGTVTEIHDYLRLLYARVGHPVCPNHGIEITSQTIEQMVDRVLEYPEKTRIQIMAPIVSGKKGTHKKTIEEIKKEGYVRIRVDGEIYDINDEIEIEKNKKHSIEIIIDRIVIKEGINTRLYDSIEAALRLADGYAVVDIMGDKELLFSEHYACPYCGFSVGELEPRMFSFNSPFGACPTCDGLGTKLEVDVDTVIPDRSLSLNEGAIIPWRPISSQYYPQMLASACKEFGIDMDTPLEKLTKEELDIILNGSKDKEFYFEYKNDFGMTRETWIPFEGILPNIERRYRETNSDFTRDQMAQYMTDLPCPSCKGYRLKEETLSVKVNNHHIGQISEFSINEALDFFDGLELSEKETQIAAPIFKEVRARLGFLKNVGLDYLTMSRAAGTLSGGEAQRIRLATQIGSRLTGVLYILDEPSIGLHQRDNDRLISTLQSMRDIGNTLIVVEHDEDTMMAADYLIDIGPGAGEHGGRIVAAGTPEEVAKNKNSITGDYLSGKKFIPVPAKRRKGNGLELEIIGAKANNLKNVNAKIPLATFSCVTGVSGSGKSSLVNEVLRKALARKLNRNHAKPGEHKEIKGIENLEKIINIDQSPIGRTPRSNPATYTGAFDDIRDLFASTNEAKVRGYKKGRFSFNVKGGRCEACKGDGIIKIEMHFLPDVYVPCEVCHGKRYNGETLDIRYKGKNIAEVLEMTVEEGLEYFTNQPRIARKLQTIVDVGLGYIRLGQPATTLSGGEAQRVKLASELHKRSNGKSFYILDEPTTGLHADDIGRLLKVLQRLVEENGDTVLVIEHNLDVIKQADYLIDLGPEGGDGGGQIIATGTPEKIARSKKSYTGKYLKPILERDKERTEERIATAKKK</sequence>